<dbReference type="EMBL" id="U10358">
    <property type="protein sequence ID" value="AAA19008.1"/>
    <property type="molecule type" value="mRNA"/>
</dbReference>
<dbReference type="PIR" id="S38283">
    <property type="entry name" value="S38283"/>
</dbReference>
<dbReference type="RefSeq" id="NP_001075809.1">
    <property type="nucleotide sequence ID" value="NM_001082340.1"/>
</dbReference>
<dbReference type="SMR" id="Q28614"/>
<dbReference type="STRING" id="9986.ENSOCUP00000005837"/>
<dbReference type="GlyCosmos" id="Q28614">
    <property type="glycosylation" value="1 site, No reported glycans"/>
</dbReference>
<dbReference type="PaxDb" id="9986-ENSOCUP00000005837"/>
<dbReference type="GeneID" id="100009190"/>
<dbReference type="KEGG" id="ocu:100009190"/>
<dbReference type="CTD" id="8170"/>
<dbReference type="eggNOG" id="ENOG502QWSG">
    <property type="taxonomic scope" value="Eukaryota"/>
</dbReference>
<dbReference type="InParanoid" id="Q28614"/>
<dbReference type="OrthoDB" id="426293at2759"/>
<dbReference type="Proteomes" id="UP000001811">
    <property type="component" value="Unplaced"/>
</dbReference>
<dbReference type="GO" id="GO:0016324">
    <property type="term" value="C:apical plasma membrane"/>
    <property type="evidence" value="ECO:0007669"/>
    <property type="project" value="UniProtKB-SubCell"/>
</dbReference>
<dbReference type="GO" id="GO:0016323">
    <property type="term" value="C:basolateral plasma membrane"/>
    <property type="evidence" value="ECO:0007669"/>
    <property type="project" value="UniProtKB-SubCell"/>
</dbReference>
<dbReference type="GO" id="GO:0015204">
    <property type="term" value="F:urea transmembrane transporter activity"/>
    <property type="evidence" value="ECO:0000314"/>
    <property type="project" value="UniProtKB"/>
</dbReference>
<dbReference type="FunFam" id="1.10.3430.10:FF:000002">
    <property type="entry name" value="urea transporter 2"/>
    <property type="match status" value="1"/>
</dbReference>
<dbReference type="Gene3D" id="1.10.3430.10">
    <property type="entry name" value="Ammonium transporter AmtB like domains"/>
    <property type="match status" value="1"/>
</dbReference>
<dbReference type="InterPro" id="IPR029020">
    <property type="entry name" value="Ammonium/urea_transptr"/>
</dbReference>
<dbReference type="InterPro" id="IPR004937">
    <property type="entry name" value="Urea_transporter"/>
</dbReference>
<dbReference type="PANTHER" id="PTHR10464">
    <property type="entry name" value="UREA TRANSPORTER"/>
    <property type="match status" value="1"/>
</dbReference>
<dbReference type="PANTHER" id="PTHR10464:SF6">
    <property type="entry name" value="UREA TRANSPORTER 2"/>
    <property type="match status" value="1"/>
</dbReference>
<dbReference type="Pfam" id="PF03253">
    <property type="entry name" value="UT"/>
    <property type="match status" value="1"/>
</dbReference>
<dbReference type="PIRSF" id="PIRSF016502">
    <property type="entry name" value="Urea_transporter"/>
    <property type="match status" value="1"/>
</dbReference>
<feature type="chain" id="PRO_0000065740" description="Urea transporter 2">
    <location>
        <begin position="1"/>
        <end position="397"/>
    </location>
</feature>
<feature type="transmembrane region" description="Helical" evidence="2">
    <location>
        <begin position="68"/>
        <end position="85"/>
    </location>
</feature>
<feature type="transmembrane region" description="Helical" evidence="2">
    <location>
        <begin position="92"/>
        <end position="109"/>
    </location>
</feature>
<feature type="transmembrane region" description="Helical" evidence="2">
    <location>
        <begin position="115"/>
        <end position="135"/>
    </location>
</feature>
<feature type="transmembrane region" description="Helical" evidence="2">
    <location>
        <begin position="143"/>
        <end position="163"/>
    </location>
</feature>
<feature type="transmembrane region" description="Helical" evidence="2">
    <location>
        <begin position="172"/>
        <end position="192"/>
    </location>
</feature>
<feature type="transmembrane region" description="Helical" evidence="2">
    <location>
        <begin position="239"/>
        <end position="257"/>
    </location>
</feature>
<feature type="transmembrane region" description="Helical" evidence="2">
    <location>
        <begin position="264"/>
        <end position="280"/>
    </location>
</feature>
<feature type="transmembrane region" description="Helical" evidence="2">
    <location>
        <begin position="287"/>
        <end position="303"/>
    </location>
</feature>
<feature type="transmembrane region" description="Helical" evidence="2">
    <location>
        <begin position="309"/>
        <end position="329"/>
    </location>
</feature>
<feature type="transmembrane region" description="Helical" evidence="2">
    <location>
        <begin position="331"/>
        <end position="351"/>
    </location>
</feature>
<feature type="glycosylation site" description="N-linked (GlcNAc...) asparagine" evidence="2">
    <location>
        <position position="210"/>
    </location>
</feature>
<proteinExistence type="evidence at transcript level"/>
<name>UT2_RABIT</name>
<gene>
    <name type="primary">SLC14A2</name>
    <name type="synonym">UT2</name>
</gene>
<keyword id="KW-1003">Cell membrane</keyword>
<keyword id="KW-0325">Glycoprotein</keyword>
<keyword id="KW-0472">Membrane</keyword>
<keyword id="KW-1185">Reference proteome</keyword>
<keyword id="KW-0812">Transmembrane</keyword>
<keyword id="KW-1133">Transmembrane helix</keyword>
<keyword id="KW-0813">Transport</keyword>
<protein>
    <recommendedName>
        <fullName>Urea transporter 2</fullName>
    </recommendedName>
    <alternativeName>
        <fullName>Solute carrier family 14 member 2</fullName>
    </alternativeName>
    <alternativeName>
        <fullName>Urea transporter, kidney</fullName>
    </alternativeName>
    <alternativeName>
        <fullName>Vasopressin-regulated urea transporter</fullName>
    </alternativeName>
</protein>
<accession>Q28614</accession>
<sequence length="397" mass="43136">MEDSSEIKVETASSRTSWIQSSVAAGGKRISRALGYITGEMKECAEGLKDKSPVFQFLDWVLRGTSQVMFVNNPLSGILIVIGLFVQNPWWAIAGCLGTVMSTLTALILSQDRSAIASGLHGYNGVLVGLLIAVFSDKGDYYWWLLLPVIVMSMSCPILSSALGTIFSKWDLPVFTLPFNIAVTLYLAATGHYNLFFPTTLLQPVSSVPNITWSEIQVPLLLRAIPVGIGQVYGCDNPWTGGIFLIALFISSPLICLHAAIGSTMGMLAALTIATPFDSIYFGLCGFNSTLACIAVGGMFYVITWQTHLLAVACALFAAYVGAALTNVLSVFGLPTCTWPFCISALIFLLLTTNNPAIYKLPLSKVTYPEANRTYYLTQERNRRSSTITKYQAYDVS</sequence>
<comment type="function">
    <text evidence="3 4">Mediates the transport of urea driven by a concentration gradient across the cell membrane of the renal inner medullary collecting duct which is critical to the urinary concentrating mechanism.</text>
</comment>
<comment type="catalytic activity">
    <reaction evidence="3 4">
        <text>urea(in) = urea(out)</text>
        <dbReference type="Rhea" id="RHEA:32799"/>
        <dbReference type="ChEBI" id="CHEBI:16199"/>
    </reaction>
</comment>
<comment type="activity regulation">
    <text evidence="3 4">Inhibited by urea analogs and phloretin.</text>
</comment>
<comment type="subcellular location">
    <subcellularLocation>
        <location evidence="1">Apical cell membrane</location>
        <topology evidence="2">Multi-pass membrane protein</topology>
    </subcellularLocation>
    <subcellularLocation>
        <location evidence="1">Basolateral cell membrane</location>
        <topology evidence="2">Multi-pass membrane protein</topology>
    </subcellularLocation>
</comment>
<comment type="tissue specificity">
    <text evidence="3">Kidney.</text>
</comment>
<comment type="similarity">
    <text evidence="5">Belongs to the urea transporter family.</text>
</comment>
<organism>
    <name type="scientific">Oryctolagus cuniculus</name>
    <name type="common">Rabbit</name>
    <dbReference type="NCBI Taxonomy" id="9986"/>
    <lineage>
        <taxon>Eukaryota</taxon>
        <taxon>Metazoa</taxon>
        <taxon>Chordata</taxon>
        <taxon>Craniata</taxon>
        <taxon>Vertebrata</taxon>
        <taxon>Euteleostomi</taxon>
        <taxon>Mammalia</taxon>
        <taxon>Eutheria</taxon>
        <taxon>Euarchontoglires</taxon>
        <taxon>Glires</taxon>
        <taxon>Lagomorpha</taxon>
        <taxon>Leporidae</taxon>
        <taxon>Oryctolagus</taxon>
    </lineage>
</organism>
<reference key="1">
    <citation type="journal article" date="1993" name="Nature">
        <title>Cloning and characterization of the vasopressin-regulated urea transporter.</title>
        <authorList>
            <person name="You G."/>
            <person name="Smith C.P."/>
            <person name="Kanai Y."/>
            <person name="Lee W.-S."/>
            <person name="Stelzner M."/>
            <person name="Hediger M.A."/>
        </authorList>
    </citation>
    <scope>NUCLEOTIDE SEQUENCE [MRNA]</scope>
    <scope>FUNCTION</scope>
    <scope>TRANSPORTER ACTIVITY</scope>
    <scope>ACTIVITY REGULATION</scope>
    <scope>TISSUE SPECIFICITY</scope>
    <source>
        <tissue>Kidney</tissue>
    </source>
</reference>
<reference key="2">
    <citation type="journal article" date="1996" name="Am. J. Physiol.">
        <title>Functional differentiation of the human red blood cell and kidney urea transporters.</title>
        <authorList>
            <person name="Martial S."/>
            <person name="Olives B."/>
            <person name="Abrami L."/>
            <person name="Couriaud C."/>
            <person name="Bailly P."/>
            <person name="You G."/>
            <person name="Hediger M.A."/>
            <person name="Cartron J.P."/>
            <person name="Ripoche P."/>
            <person name="Rousselet G."/>
        </authorList>
    </citation>
    <scope>FUNCTION</scope>
    <scope>TRANSPORTER ACTIVITY</scope>
    <scope>ACTIVITY REGULATION</scope>
</reference>
<evidence type="ECO:0000250" key="1">
    <source>
        <dbReference type="UniProtKB" id="Q8R4T9"/>
    </source>
</evidence>
<evidence type="ECO:0000255" key="2"/>
<evidence type="ECO:0000269" key="3">
    <source>
    </source>
</evidence>
<evidence type="ECO:0000269" key="4">
    <source>
    </source>
</evidence>
<evidence type="ECO:0000305" key="5"/>